<keyword id="KW-0328">Glycosyltransferase</keyword>
<keyword id="KW-0479">Metal-binding</keyword>
<keyword id="KW-1185">Reference proteome</keyword>
<keyword id="KW-0808">Transferase</keyword>
<keyword id="KW-0819">tRNA processing</keyword>
<keyword id="KW-0862">Zinc</keyword>
<name>ATGT_NANEQ</name>
<protein>
    <recommendedName>
        <fullName evidence="1">tRNA-guanine(15) transglycosylase</fullName>
        <ecNumber evidence="1">2.4.2.48</ecNumber>
    </recommendedName>
    <alternativeName>
        <fullName evidence="1">7-cyano-7-deazaguanine tRNA-ribosyltransferase</fullName>
    </alternativeName>
    <alternativeName>
        <fullName evidence="1">Archaeal tRNA-guanine transglycosylase</fullName>
    </alternativeName>
</protein>
<comment type="function">
    <text evidence="1">Exchanges the guanine residue with 7-cyano-7-deazaguanine (preQ0) at position 15 in the dihydrouridine loop (D-loop) of archaeal tRNAs.</text>
</comment>
<comment type="catalytic activity">
    <reaction evidence="1">
        <text>guanosine(15) in tRNA + 7-cyano-7-deazaguanine = 7-cyano-7-carbaguanosine(15) in tRNA + guanine</text>
        <dbReference type="Rhea" id="RHEA:43164"/>
        <dbReference type="Rhea" id="RHEA-COMP:10371"/>
        <dbReference type="Rhea" id="RHEA-COMP:10372"/>
        <dbReference type="ChEBI" id="CHEBI:16235"/>
        <dbReference type="ChEBI" id="CHEBI:45075"/>
        <dbReference type="ChEBI" id="CHEBI:74269"/>
        <dbReference type="ChEBI" id="CHEBI:82850"/>
        <dbReference type="EC" id="2.4.2.48"/>
    </reaction>
</comment>
<comment type="cofactor">
    <cofactor evidence="1">
        <name>Zn(2+)</name>
        <dbReference type="ChEBI" id="CHEBI:29105"/>
    </cofactor>
    <text evidence="1">Binds 1 zinc ion per subunit.</text>
</comment>
<comment type="pathway">
    <text evidence="1">tRNA modification; archaeosine-tRNA biosynthesis.</text>
</comment>
<comment type="similarity">
    <text evidence="1">Belongs to the archaeosine tRNA-ribosyltransferase family.</text>
</comment>
<comment type="sequence caution" evidence="2">
    <conflict type="erroneous initiation">
        <sequence resource="EMBL-CDS" id="AAR38979"/>
    </conflict>
    <text>Extended N-terminus.</text>
</comment>
<gene>
    <name evidence="1" type="primary">tgtA</name>
    <name type="ordered locus">NEQ124</name>
</gene>
<feature type="chain" id="PRO_0000247878" description="tRNA-guanine(15) transglycosylase">
    <location>
        <begin position="1"/>
        <end position="410"/>
    </location>
</feature>
<feature type="active site" description="Nucleophile" evidence="1">
    <location>
        <position position="87"/>
    </location>
</feature>
<feature type="binding site" evidence="1">
    <location>
        <position position="122"/>
    </location>
    <ligand>
        <name>substrate</name>
    </ligand>
</feature>
<feature type="binding site" evidence="1">
    <location>
        <position position="187"/>
    </location>
    <ligand>
        <name>substrate</name>
    </ligand>
</feature>
<accession>Q74N90</accession>
<organism>
    <name type="scientific">Nanoarchaeum equitans (strain Kin4-M)</name>
    <dbReference type="NCBI Taxonomy" id="228908"/>
    <lineage>
        <taxon>Archaea</taxon>
        <taxon>Nanobdellota</taxon>
        <taxon>Candidatus Nanoarchaeia</taxon>
        <taxon>Nanoarchaeales</taxon>
        <taxon>Nanoarchaeaceae</taxon>
        <taxon>Nanoarchaeum</taxon>
    </lineage>
</organism>
<evidence type="ECO:0000255" key="1">
    <source>
        <dbReference type="HAMAP-Rule" id="MF_01634"/>
    </source>
</evidence>
<evidence type="ECO:0000305" key="2"/>
<sequence>MKIKFEIKYKDAAGKVGKIKLNGKTIETPYLFPVINPFKQELPIKEIKKMGFNAIITNAYILFKRKEEVMEKGIHNFLGFDGIIETDSGAYQLLQYGDIDIENEDIIYFQNEIGVDIGNILDIPSYGKTYEEAKKDLEITLERLKQAIEMANFAINGPIQGDKYLDLRYKALEEVSKLDIDIYAIGGIVPYMNQYKIESLAKIIGPLLLDIPRDRPVHLFGLGHPLIMPLFVALGADLFDSASYSLFAKEERILTPFRTFRLEDLTDSYILDYKASELKGMENKTYIIAKHNLLVLRNEINFIRDLIRQNRLWDYVIIKAHAHPSIYFATKYVLENLYEKLKEHEPITKRVGILYQGELTELRSDLRYAIEQLKKLDKSQINDILDYAWPFGQFEIGEKDKKLFFQRFLK</sequence>
<reference key="1">
    <citation type="journal article" date="2003" name="Proc. Natl. Acad. Sci. U.S.A.">
        <title>The genome of Nanoarchaeum equitans: insights into early archaeal evolution and derived parasitism.</title>
        <authorList>
            <person name="Waters E."/>
            <person name="Hohn M.J."/>
            <person name="Ahel I."/>
            <person name="Graham D.E."/>
            <person name="Adams M.D."/>
            <person name="Barnstead M."/>
            <person name="Beeson K.Y."/>
            <person name="Bibbs L."/>
            <person name="Bolanos R."/>
            <person name="Keller M."/>
            <person name="Kretz K."/>
            <person name="Lin X."/>
            <person name="Mathur E."/>
            <person name="Ni J."/>
            <person name="Podar M."/>
            <person name="Richardson T."/>
            <person name="Sutton G.G."/>
            <person name="Simon M."/>
            <person name="Soell D."/>
            <person name="Stetter K.O."/>
            <person name="Short J.M."/>
            <person name="Noorderwier M."/>
        </authorList>
    </citation>
    <scope>NUCLEOTIDE SEQUENCE [LARGE SCALE GENOMIC DNA]</scope>
    <source>
        <strain>Kin4-M</strain>
    </source>
</reference>
<proteinExistence type="inferred from homology"/>
<dbReference type="EC" id="2.4.2.48" evidence="1"/>
<dbReference type="EMBL" id="AE017199">
    <property type="protein sequence ID" value="AAR38979.1"/>
    <property type="status" value="ALT_INIT"/>
    <property type="molecule type" value="Genomic_DNA"/>
</dbReference>
<dbReference type="SMR" id="Q74N90"/>
<dbReference type="STRING" id="228908.NEQ124"/>
<dbReference type="EnsemblBacteria" id="AAR38979">
    <property type="protein sequence ID" value="AAR38979"/>
    <property type="gene ID" value="NEQ124"/>
</dbReference>
<dbReference type="KEGG" id="neq:NEQ124"/>
<dbReference type="PATRIC" id="fig|228908.8.peg.129"/>
<dbReference type="HOGENOM" id="CLU_030083_0_0_2"/>
<dbReference type="UniPathway" id="UPA00393"/>
<dbReference type="Proteomes" id="UP000000578">
    <property type="component" value="Chromosome"/>
</dbReference>
<dbReference type="GO" id="GO:0005737">
    <property type="term" value="C:cytoplasm"/>
    <property type="evidence" value="ECO:0007669"/>
    <property type="project" value="TreeGrafter"/>
</dbReference>
<dbReference type="GO" id="GO:0016763">
    <property type="term" value="F:pentosyltransferase activity"/>
    <property type="evidence" value="ECO:0007669"/>
    <property type="project" value="UniProtKB-UniRule"/>
</dbReference>
<dbReference type="GO" id="GO:0008270">
    <property type="term" value="F:zinc ion binding"/>
    <property type="evidence" value="ECO:0007669"/>
    <property type="project" value="UniProtKB-UniRule"/>
</dbReference>
<dbReference type="GO" id="GO:0002099">
    <property type="term" value="P:tRNA wobble guanine modification"/>
    <property type="evidence" value="ECO:0007669"/>
    <property type="project" value="TreeGrafter"/>
</dbReference>
<dbReference type="Gene3D" id="3.20.20.105">
    <property type="entry name" value="Queuine tRNA-ribosyltransferase-like"/>
    <property type="match status" value="1"/>
</dbReference>
<dbReference type="HAMAP" id="MF_01634">
    <property type="entry name" value="TgtA_arch"/>
    <property type="match status" value="1"/>
</dbReference>
<dbReference type="InterPro" id="IPR050076">
    <property type="entry name" value="ArchSynthase1/Queuine_TRR"/>
</dbReference>
<dbReference type="InterPro" id="IPR036511">
    <property type="entry name" value="TGT-like_sf"/>
</dbReference>
<dbReference type="InterPro" id="IPR004804">
    <property type="entry name" value="TgtA"/>
</dbReference>
<dbReference type="InterPro" id="IPR002616">
    <property type="entry name" value="tRNA_ribo_trans-like"/>
</dbReference>
<dbReference type="NCBIfam" id="TIGR00432">
    <property type="entry name" value="arcsn_tRNA_tgt"/>
    <property type="match status" value="1"/>
</dbReference>
<dbReference type="NCBIfam" id="TIGR00449">
    <property type="entry name" value="tgt_general"/>
    <property type="match status" value="1"/>
</dbReference>
<dbReference type="PANTHER" id="PTHR46499">
    <property type="entry name" value="QUEUINE TRNA-RIBOSYLTRANSFERASE"/>
    <property type="match status" value="1"/>
</dbReference>
<dbReference type="PANTHER" id="PTHR46499:SF1">
    <property type="entry name" value="QUEUINE TRNA-RIBOSYLTRANSFERASE"/>
    <property type="match status" value="1"/>
</dbReference>
<dbReference type="Pfam" id="PF01702">
    <property type="entry name" value="TGT"/>
    <property type="match status" value="1"/>
</dbReference>
<dbReference type="SUPFAM" id="SSF51713">
    <property type="entry name" value="tRNA-guanine transglycosylase"/>
    <property type="match status" value="1"/>
</dbReference>